<name>ARGB_PSEPF</name>
<reference key="1">
    <citation type="journal article" date="2009" name="Genome Biol.">
        <title>Genomic and genetic analyses of diversity and plant interactions of Pseudomonas fluorescens.</title>
        <authorList>
            <person name="Silby M.W."/>
            <person name="Cerdeno-Tarraga A.M."/>
            <person name="Vernikos G.S."/>
            <person name="Giddens S.R."/>
            <person name="Jackson R.W."/>
            <person name="Preston G.M."/>
            <person name="Zhang X.-X."/>
            <person name="Moon C.D."/>
            <person name="Gehrig S.M."/>
            <person name="Godfrey S.A.C."/>
            <person name="Knight C.G."/>
            <person name="Malone J.G."/>
            <person name="Robinson Z."/>
            <person name="Spiers A.J."/>
            <person name="Harris S."/>
            <person name="Challis G.L."/>
            <person name="Yaxley A.M."/>
            <person name="Harris D."/>
            <person name="Seeger K."/>
            <person name="Murphy L."/>
            <person name="Rutter S."/>
            <person name="Squares R."/>
            <person name="Quail M.A."/>
            <person name="Saunders E."/>
            <person name="Mavromatis K."/>
            <person name="Brettin T.S."/>
            <person name="Bentley S.D."/>
            <person name="Hothersall J."/>
            <person name="Stephens E."/>
            <person name="Thomas C.M."/>
            <person name="Parkhill J."/>
            <person name="Levy S.B."/>
            <person name="Rainey P.B."/>
            <person name="Thomson N.R."/>
        </authorList>
    </citation>
    <scope>NUCLEOTIDE SEQUENCE [LARGE SCALE GENOMIC DNA]</scope>
    <source>
        <strain>Pf0-1</strain>
    </source>
</reference>
<comment type="function">
    <text evidence="1">Catalyzes the ATP-dependent phosphorylation of N-acetyl-L-glutamate.</text>
</comment>
<comment type="catalytic activity">
    <reaction evidence="1">
        <text>N-acetyl-L-glutamate + ATP = N-acetyl-L-glutamyl 5-phosphate + ADP</text>
        <dbReference type="Rhea" id="RHEA:14629"/>
        <dbReference type="ChEBI" id="CHEBI:30616"/>
        <dbReference type="ChEBI" id="CHEBI:44337"/>
        <dbReference type="ChEBI" id="CHEBI:57936"/>
        <dbReference type="ChEBI" id="CHEBI:456216"/>
        <dbReference type="EC" id="2.7.2.8"/>
    </reaction>
</comment>
<comment type="pathway">
    <text evidence="1">Amino-acid biosynthesis; L-arginine biosynthesis; N(2)-acetyl-L-ornithine from L-glutamate: step 2/4.</text>
</comment>
<comment type="subcellular location">
    <subcellularLocation>
        <location evidence="1">Cytoplasm</location>
    </subcellularLocation>
</comment>
<comment type="similarity">
    <text evidence="1">Belongs to the acetylglutamate kinase family. ArgB subfamily.</text>
</comment>
<proteinExistence type="inferred from homology"/>
<dbReference type="EC" id="2.7.2.8" evidence="1"/>
<dbReference type="EMBL" id="CP000094">
    <property type="protein sequence ID" value="ABA77280.1"/>
    <property type="molecule type" value="Genomic_DNA"/>
</dbReference>
<dbReference type="RefSeq" id="WP_007954443.1">
    <property type="nucleotide sequence ID" value="NC_007492.2"/>
</dbReference>
<dbReference type="SMR" id="Q3K4M4"/>
<dbReference type="KEGG" id="pfo:Pfl01_5543"/>
<dbReference type="eggNOG" id="COG0548">
    <property type="taxonomic scope" value="Bacteria"/>
</dbReference>
<dbReference type="HOGENOM" id="CLU_053680_0_0_6"/>
<dbReference type="UniPathway" id="UPA00068">
    <property type="reaction ID" value="UER00107"/>
</dbReference>
<dbReference type="Proteomes" id="UP000002704">
    <property type="component" value="Chromosome"/>
</dbReference>
<dbReference type="GO" id="GO:0005737">
    <property type="term" value="C:cytoplasm"/>
    <property type="evidence" value="ECO:0007669"/>
    <property type="project" value="UniProtKB-SubCell"/>
</dbReference>
<dbReference type="GO" id="GO:0003991">
    <property type="term" value="F:acetylglutamate kinase activity"/>
    <property type="evidence" value="ECO:0007669"/>
    <property type="project" value="UniProtKB-UniRule"/>
</dbReference>
<dbReference type="GO" id="GO:0005524">
    <property type="term" value="F:ATP binding"/>
    <property type="evidence" value="ECO:0007669"/>
    <property type="project" value="UniProtKB-UniRule"/>
</dbReference>
<dbReference type="GO" id="GO:0042450">
    <property type="term" value="P:arginine biosynthetic process via ornithine"/>
    <property type="evidence" value="ECO:0007669"/>
    <property type="project" value="UniProtKB-UniRule"/>
</dbReference>
<dbReference type="GO" id="GO:0006526">
    <property type="term" value="P:L-arginine biosynthetic process"/>
    <property type="evidence" value="ECO:0007669"/>
    <property type="project" value="UniProtKB-UniPathway"/>
</dbReference>
<dbReference type="CDD" id="cd04250">
    <property type="entry name" value="AAK_NAGK-C"/>
    <property type="match status" value="1"/>
</dbReference>
<dbReference type="FunFam" id="3.40.1160.10:FF:000004">
    <property type="entry name" value="Acetylglutamate kinase"/>
    <property type="match status" value="1"/>
</dbReference>
<dbReference type="Gene3D" id="3.40.1160.10">
    <property type="entry name" value="Acetylglutamate kinase-like"/>
    <property type="match status" value="1"/>
</dbReference>
<dbReference type="HAMAP" id="MF_00082">
    <property type="entry name" value="ArgB"/>
    <property type="match status" value="1"/>
</dbReference>
<dbReference type="InterPro" id="IPR036393">
    <property type="entry name" value="AceGlu_kinase-like_sf"/>
</dbReference>
<dbReference type="InterPro" id="IPR004662">
    <property type="entry name" value="AcgluKinase_fam"/>
</dbReference>
<dbReference type="InterPro" id="IPR037528">
    <property type="entry name" value="ArgB"/>
</dbReference>
<dbReference type="InterPro" id="IPR001048">
    <property type="entry name" value="Asp/Glu/Uridylate_kinase"/>
</dbReference>
<dbReference type="InterPro" id="IPR001057">
    <property type="entry name" value="Glu/AcGlu_kinase"/>
</dbReference>
<dbReference type="InterPro" id="IPR041727">
    <property type="entry name" value="NAGK-C"/>
</dbReference>
<dbReference type="NCBIfam" id="TIGR00761">
    <property type="entry name" value="argB"/>
    <property type="match status" value="1"/>
</dbReference>
<dbReference type="PANTHER" id="PTHR23342">
    <property type="entry name" value="N-ACETYLGLUTAMATE SYNTHASE"/>
    <property type="match status" value="1"/>
</dbReference>
<dbReference type="PANTHER" id="PTHR23342:SF0">
    <property type="entry name" value="N-ACETYLGLUTAMATE SYNTHASE, MITOCHONDRIAL"/>
    <property type="match status" value="1"/>
</dbReference>
<dbReference type="Pfam" id="PF00696">
    <property type="entry name" value="AA_kinase"/>
    <property type="match status" value="1"/>
</dbReference>
<dbReference type="PIRSF" id="PIRSF000728">
    <property type="entry name" value="NAGK"/>
    <property type="match status" value="1"/>
</dbReference>
<dbReference type="PRINTS" id="PR00474">
    <property type="entry name" value="GLU5KINASE"/>
</dbReference>
<dbReference type="SUPFAM" id="SSF53633">
    <property type="entry name" value="Carbamate kinase-like"/>
    <property type="match status" value="1"/>
</dbReference>
<keyword id="KW-0028">Amino-acid biosynthesis</keyword>
<keyword id="KW-0055">Arginine biosynthesis</keyword>
<keyword id="KW-0067">ATP-binding</keyword>
<keyword id="KW-0963">Cytoplasm</keyword>
<keyword id="KW-0418">Kinase</keyword>
<keyword id="KW-0547">Nucleotide-binding</keyword>
<keyword id="KW-0808">Transferase</keyword>
<accession>Q3K4M4</accession>
<feature type="chain" id="PRO_0000264735" description="Acetylglutamate kinase">
    <location>
        <begin position="1"/>
        <end position="301"/>
    </location>
</feature>
<feature type="binding site" evidence="1">
    <location>
        <begin position="68"/>
        <end position="69"/>
    </location>
    <ligand>
        <name>substrate</name>
    </ligand>
</feature>
<feature type="binding site" evidence="1">
    <location>
        <position position="90"/>
    </location>
    <ligand>
        <name>substrate</name>
    </ligand>
</feature>
<feature type="binding site" evidence="1">
    <location>
        <position position="195"/>
    </location>
    <ligand>
        <name>substrate</name>
    </ligand>
</feature>
<feature type="site" description="Transition state stabilizer" evidence="1">
    <location>
        <position position="33"/>
    </location>
</feature>
<feature type="site" description="Transition state stabilizer" evidence="1">
    <location>
        <position position="255"/>
    </location>
</feature>
<organism>
    <name type="scientific">Pseudomonas fluorescens (strain Pf0-1)</name>
    <dbReference type="NCBI Taxonomy" id="205922"/>
    <lineage>
        <taxon>Bacteria</taxon>
        <taxon>Pseudomonadati</taxon>
        <taxon>Pseudomonadota</taxon>
        <taxon>Gammaproteobacteria</taxon>
        <taxon>Pseudomonadales</taxon>
        <taxon>Pseudomonadaceae</taxon>
        <taxon>Pseudomonas</taxon>
    </lineage>
</organism>
<evidence type="ECO:0000255" key="1">
    <source>
        <dbReference type="HAMAP-Rule" id="MF_00082"/>
    </source>
</evidence>
<protein>
    <recommendedName>
        <fullName evidence="1">Acetylglutamate kinase</fullName>
        <ecNumber evidence="1">2.7.2.8</ecNumber>
    </recommendedName>
    <alternativeName>
        <fullName evidence="1">N-acetyl-L-glutamate 5-phosphotransferase</fullName>
    </alternativeName>
    <alternativeName>
        <fullName evidence="1">NAG kinase</fullName>
        <shortName evidence="1">NAGK</shortName>
    </alternativeName>
</protein>
<sequence length="301" mass="31744">MTLERDAAANTAKVLSEALPYIRRYVGKTLVIKYGGNAMESEELKTGFARDIVLMKAVGINPVVVHGGGPQIGDLLKRLSIESHFVDGMRVTDAATMDVVEMVLGGQVNKSIVNLINRHGGSAIGLTGKDAGLIRAKKLTVTRQTPEMTQPEIIDIGHVGEVVGINTELLNLLVKGNFIPVIAPIGVGENGESYNINADLVAGKVAEALKAEKLMLLTNIAGLMDKSGTVLTGLSTQQVDDLIADGTIYGGMLPKIRCALEAVQGGVGSSLIIDGRVPNAILLEIFTDTGVGTLISNRKRP</sequence>
<gene>
    <name evidence="1" type="primary">argB</name>
    <name type="ordered locus">Pfl01_5543</name>
</gene>